<gene>
    <name type="primary">KXD1</name>
    <name type="ORF">FOSTERSO_1675</name>
</gene>
<evidence type="ECO:0000250" key="1"/>
<evidence type="ECO:0000255" key="2"/>
<evidence type="ECO:0000256" key="3">
    <source>
        <dbReference type="SAM" id="MobiDB-lite"/>
    </source>
</evidence>
<evidence type="ECO:0000305" key="4"/>
<comment type="function">
    <text evidence="1">Component of the biogenesis of lysosome-related organelles complex-1 (BLOC-1) involved in endosomal cargo sorting.</text>
</comment>
<comment type="subunit">
    <text evidence="1">Component of the biogenesis of lysosome-related organelles complex-1 (BLOC-1) composed of at least BLI1, BLS1, CNL1, KXD1, SNN1 and VAB2.</text>
</comment>
<comment type="subcellular location">
    <subcellularLocation>
        <location evidence="1">Endosome</location>
    </subcellularLocation>
</comment>
<comment type="similarity">
    <text evidence="4">Belongs to the KXD1 family.</text>
</comment>
<keyword id="KW-0175">Coiled coil</keyword>
<keyword id="KW-0967">Endosome</keyword>
<keyword id="KW-0813">Transport</keyword>
<organism>
    <name type="scientific">Saccharomyces cerevisiae (strain FostersO)</name>
    <name type="common">Baker's yeast</name>
    <dbReference type="NCBI Taxonomy" id="764101"/>
    <lineage>
        <taxon>Eukaryota</taxon>
        <taxon>Fungi</taxon>
        <taxon>Dikarya</taxon>
        <taxon>Ascomycota</taxon>
        <taxon>Saccharomycotina</taxon>
        <taxon>Saccharomycetes</taxon>
        <taxon>Saccharomycetales</taxon>
        <taxon>Saccharomycetaceae</taxon>
        <taxon>Saccharomyces</taxon>
    </lineage>
</organism>
<feature type="chain" id="PRO_0000410677" description="Biogenesis of lysosome-related organelles complex 1 subunit KXD1">
    <location>
        <begin position="1"/>
        <end position="218"/>
    </location>
</feature>
<feature type="region of interest" description="Disordered" evidence="3">
    <location>
        <begin position="1"/>
        <end position="65"/>
    </location>
</feature>
<feature type="coiled-coil region" evidence="2">
    <location>
        <begin position="142"/>
        <end position="192"/>
    </location>
</feature>
<feature type="compositionally biased region" description="Polar residues" evidence="3">
    <location>
        <begin position="17"/>
        <end position="30"/>
    </location>
</feature>
<feature type="compositionally biased region" description="Low complexity" evidence="3">
    <location>
        <begin position="39"/>
        <end position="65"/>
    </location>
</feature>
<name>KXD1_YEASO</name>
<accession>E7NHM9</accession>
<proteinExistence type="inferred from homology"/>
<sequence length="218" mass="24442">MVTGISEENDDEETFSAVHSSTPSINSQSYAIPITEEMSSSFHDSISTTSNSSGSFDSDGSNVSDVVEQNEMDNESNVDEDLFLDNDIPQSSNLLPTDAQDPGPIFDVSRYIFDSLKQSIDSADFSEALSLQTKTSAVINSKSLELKQYIDEMKSRLTQLQEKFENGEATSKKIKRDLETSRKNIDYLNAALRVDFPIEFNQAREKILERRLNEDHDC</sequence>
<reference key="1">
    <citation type="journal article" date="2011" name="PLoS Genet.">
        <title>Whole-genome comparison reveals novel genetic elements that characterize the genome of industrial strains of Saccharomyces cerevisiae.</title>
        <authorList>
            <person name="Borneman A.R."/>
            <person name="Desany B.A."/>
            <person name="Riches D."/>
            <person name="Affourtit J.P."/>
            <person name="Forgan A.H."/>
            <person name="Pretorius I.S."/>
            <person name="Egholm M."/>
            <person name="Chambers P.J."/>
        </authorList>
    </citation>
    <scope>NUCLEOTIDE SEQUENCE [LARGE SCALE GENOMIC DNA]</scope>
    <source>
        <strain>FostersO</strain>
    </source>
</reference>
<protein>
    <recommendedName>
        <fullName>Biogenesis of lysosome-related organelles complex 1 subunit KXD1</fullName>
        <shortName>BLOC-1 subunit KXD1</shortName>
    </recommendedName>
    <alternativeName>
        <fullName>KxDL homolog</fullName>
    </alternativeName>
</protein>
<dbReference type="EMBL" id="AEEZ01000040">
    <property type="protein sequence ID" value="EGA62294.1"/>
    <property type="molecule type" value="Genomic_DNA"/>
</dbReference>
<dbReference type="SMR" id="E7NHM9"/>
<dbReference type="HOGENOM" id="CLU_099155_0_0_1"/>
<dbReference type="OMA" id="TPMFDTS"/>
<dbReference type="GO" id="GO:0031083">
    <property type="term" value="C:BLOC-1 complex"/>
    <property type="evidence" value="ECO:0007669"/>
    <property type="project" value="TreeGrafter"/>
</dbReference>
<dbReference type="GO" id="GO:0005768">
    <property type="term" value="C:endosome"/>
    <property type="evidence" value="ECO:0007669"/>
    <property type="project" value="UniProtKB-SubCell"/>
</dbReference>
<dbReference type="GO" id="GO:0007032">
    <property type="term" value="P:endosome organization"/>
    <property type="evidence" value="ECO:0007669"/>
    <property type="project" value="TreeGrafter"/>
</dbReference>
<dbReference type="GO" id="GO:0032880">
    <property type="term" value="P:regulation of protein localization"/>
    <property type="evidence" value="ECO:0007669"/>
    <property type="project" value="TreeGrafter"/>
</dbReference>
<dbReference type="InterPro" id="IPR051390">
    <property type="entry name" value="BLOC-1_subunit_KXD1"/>
</dbReference>
<dbReference type="InterPro" id="IPR019371">
    <property type="entry name" value="KxDL_dom"/>
</dbReference>
<dbReference type="PANTHER" id="PTHR37787">
    <property type="entry name" value="BIOGENESIS OF LYSOSOME-RELATED ORGANELLES COMPLEX 1 SUBUNIT KXD1"/>
    <property type="match status" value="1"/>
</dbReference>
<dbReference type="PANTHER" id="PTHR37787:SF1">
    <property type="entry name" value="BIOGENESIS OF LYSOSOME-RELATED ORGANELLES COMPLEX 1 SUBUNIT KXD1"/>
    <property type="match status" value="1"/>
</dbReference>
<dbReference type="Pfam" id="PF10241">
    <property type="entry name" value="KxDL"/>
    <property type="match status" value="1"/>
</dbReference>